<gene>
    <name evidence="6" type="primary">CRE18</name>
    <name type="ORF">PITG_23226</name>
</gene>
<keyword id="KW-1035">Host cytoplasm</keyword>
<keyword id="KW-1048">Host nucleus</keyword>
<keyword id="KW-1185">Reference proteome</keyword>
<keyword id="KW-0964">Secreted</keyword>
<keyword id="KW-0732">Signal</keyword>
<keyword id="KW-0843">Virulence</keyword>
<sequence>MSKLFYAFAVLAVHVLTSSPTTAASNLPVNLVTGPAFTTPAGAAHRRFLRSIHEGEDSLKPSAFSEERTALRAMDYLLKPKHKKLAAALKKSTSKHKLSVAPEKMKSIQVLGDPKNPEREWFKRLYNSKRGDPQTLRKLGQFKTEAQLSRYIKFYVVCRTCIACYSSGRSDSCHRTPRMVRTVGVGCRD</sequence>
<reference key="1">
    <citation type="journal article" date="2009" name="Nature">
        <title>Genome sequence and analysis of the Irish potato famine pathogen Phytophthora infestans.</title>
        <authorList>
            <consortium name="The Broad Institute Genome Sequencing Platform"/>
            <person name="Haas B.J."/>
            <person name="Kamoun S."/>
            <person name="Zody M.C."/>
            <person name="Jiang R.H."/>
            <person name="Handsaker R.E."/>
            <person name="Cano L.M."/>
            <person name="Grabherr M."/>
            <person name="Kodira C.D."/>
            <person name="Raffaele S."/>
            <person name="Torto-Alalibo T."/>
            <person name="Bozkurt T.O."/>
            <person name="Ah-Fong A.M."/>
            <person name="Alvarado L."/>
            <person name="Anderson V.L."/>
            <person name="Armstrong M.R."/>
            <person name="Avrova A."/>
            <person name="Baxter L."/>
            <person name="Beynon J."/>
            <person name="Boevink P.C."/>
            <person name="Bollmann S.R."/>
            <person name="Bos J.I."/>
            <person name="Bulone V."/>
            <person name="Cai G."/>
            <person name="Cakir C."/>
            <person name="Carrington J.C."/>
            <person name="Chawner M."/>
            <person name="Conti L."/>
            <person name="Costanzo S."/>
            <person name="Ewan R."/>
            <person name="Fahlgren N."/>
            <person name="Fischbach M.A."/>
            <person name="Fugelstad J."/>
            <person name="Gilroy E.M."/>
            <person name="Gnerre S."/>
            <person name="Green P.J."/>
            <person name="Grenville-Briggs L.J."/>
            <person name="Griffith J."/>
            <person name="Grunwald N.J."/>
            <person name="Horn K."/>
            <person name="Horner N.R."/>
            <person name="Hu C.H."/>
            <person name="Huitema E."/>
            <person name="Jeong D.H."/>
            <person name="Jones A.M."/>
            <person name="Jones J.D."/>
            <person name="Jones R.W."/>
            <person name="Karlsson E.K."/>
            <person name="Kunjeti S.G."/>
            <person name="Lamour K."/>
            <person name="Liu Z."/>
            <person name="Ma L."/>
            <person name="Maclean D."/>
            <person name="Chibucos M.C."/>
            <person name="McDonald H."/>
            <person name="McWalters J."/>
            <person name="Meijer H.J."/>
            <person name="Morgan W."/>
            <person name="Morris P.F."/>
            <person name="Munro C.A."/>
            <person name="O'Neill K."/>
            <person name="Ospina-Giraldo M."/>
            <person name="Pinzon A."/>
            <person name="Pritchard L."/>
            <person name="Ramsahoye B."/>
            <person name="Ren Q."/>
            <person name="Restrepo S."/>
            <person name="Roy S."/>
            <person name="Sadanandom A."/>
            <person name="Savidor A."/>
            <person name="Schornack S."/>
            <person name="Schwartz D.C."/>
            <person name="Schumann U.D."/>
            <person name="Schwessinger B."/>
            <person name="Seyer L."/>
            <person name="Sharpe T."/>
            <person name="Silvar C."/>
            <person name="Song J."/>
            <person name="Studholme D.J."/>
            <person name="Sykes S."/>
            <person name="Thines M."/>
            <person name="van de Vondervoort P.J."/>
            <person name="Phuntumart V."/>
            <person name="Wawra S."/>
            <person name="Weide R."/>
            <person name="Win J."/>
            <person name="Young C."/>
            <person name="Zhou S."/>
            <person name="Fry W."/>
            <person name="Meyers B.C."/>
            <person name="van West P."/>
            <person name="Ristaino J."/>
            <person name="Govers F."/>
            <person name="Birch P.R."/>
            <person name="Whisson S.C."/>
            <person name="Judelson H.S."/>
            <person name="Nusbaum C."/>
        </authorList>
    </citation>
    <scope>NUCLEOTIDE SEQUENCE [LARGE SCALE GENOMIC DNA]</scope>
    <scope>INDUCTION</scope>
    <source>
        <strain>T30-4</strain>
    </source>
</reference>
<reference key="2">
    <citation type="journal article" date="2017" name="BMC Genomics">
        <title>RNA-seq of life stages of the oomycete Phytophthora infestans reveals dynamic changes in metabolic, signal transduction, and pathogenesis genes and a major role for calcium signaling in development.</title>
        <authorList>
            <person name="Ah-Fong A.M."/>
            <person name="Kim K.S."/>
            <person name="Judelson H.S."/>
        </authorList>
    </citation>
    <scope>INDUCTION</scope>
</reference>
<reference key="3">
    <citation type="journal article" date="2017" name="Front. Plant Sci.">
        <title>Conserved RXLR effector genes of Phytophthora infestans expressed at the early stage of potato infection are suppressive to host defense.</title>
        <authorList>
            <person name="Yin J."/>
            <person name="Gu B."/>
            <person name="Huang G."/>
            <person name="Tian Y."/>
            <person name="Quan J."/>
            <person name="Lindqvist-Kreuze H."/>
            <person name="Shan W."/>
        </authorList>
    </citation>
    <scope>INDUCTION</scope>
    <scope>FUNCTION</scope>
    <scope>DOMAIN</scope>
</reference>
<reference key="4">
    <citation type="journal article" date="2019" name="J. Exp. Bot.">
        <title>Phytophthora infestans RXLR effectors act in concert at diverse subcellular locations to enhance host colonization.</title>
        <authorList>
            <person name="Wang S."/>
            <person name="McLellan H."/>
            <person name="Bukharova T."/>
            <person name="He Q."/>
            <person name="Murphy F."/>
            <person name="Shi J."/>
            <person name="Sun S."/>
            <person name="van Weymers P."/>
            <person name="Ren Y."/>
            <person name="Thilliez G."/>
            <person name="Wang H."/>
            <person name="Chen X."/>
            <person name="Engelhardt S."/>
            <person name="Vleeshouwers V."/>
            <person name="Gilroy E.M."/>
            <person name="Whisson S.C."/>
            <person name="Hein I."/>
            <person name="Wang X."/>
            <person name="Tian Z."/>
            <person name="Birch P.R.J."/>
            <person name="Boevink P.C."/>
        </authorList>
    </citation>
    <scope>SUBCELLULAR LOCATION</scope>
    <scope>FUNCTION</scope>
</reference>
<protein>
    <recommendedName>
        <fullName evidence="7">RxLR effector protein CRE18</fullName>
    </recommendedName>
    <alternativeName>
        <fullName evidence="6">Core RXLR effector 18</fullName>
    </alternativeName>
</protein>
<evidence type="ECO:0000255" key="1"/>
<evidence type="ECO:0000269" key="2">
    <source>
    </source>
</evidence>
<evidence type="ECO:0000269" key="3">
    <source>
    </source>
</evidence>
<evidence type="ECO:0000269" key="4">
    <source>
    </source>
</evidence>
<evidence type="ECO:0000269" key="5">
    <source>
    </source>
</evidence>
<evidence type="ECO:0000303" key="6">
    <source>
    </source>
</evidence>
<evidence type="ECO:0000303" key="7">
    <source>
    </source>
</evidence>
<evidence type="ECO:0000305" key="8"/>
<evidence type="ECO:0000305" key="9">
    <source>
    </source>
</evidence>
<feature type="signal peptide" evidence="1">
    <location>
        <begin position="1"/>
        <end position="23"/>
    </location>
</feature>
<feature type="chain" id="PRO_5003015109" description="RxLR effector protein CRE18">
    <location>
        <begin position="24"/>
        <end position="189"/>
    </location>
</feature>
<feature type="short sequence motif" description="RxLR-dEER" evidence="9">
    <location>
        <begin position="47"/>
        <end position="68"/>
    </location>
</feature>
<comment type="function">
    <text evidence="4 5">Effector that is involved in host plant infection. Contributes to virulence during the early infection stage, by inhibiting plant defense responses induced by both PAMP-triggered immunity (PTI) and effector-triggered immunity (ETI).</text>
</comment>
<comment type="subcellular location">
    <subcellularLocation>
        <location evidence="5">Secreted</location>
    </subcellularLocation>
    <subcellularLocation>
        <location evidence="5">Host cytoplasm</location>
    </subcellularLocation>
    <subcellularLocation>
        <location evidence="5">Host nucleus</location>
    </subcellularLocation>
</comment>
<comment type="induction">
    <text evidence="2 3 4">Expression is induced during host plant infection.</text>
</comment>
<comment type="domain">
    <text evidence="9">The RxLR-dEER motif acts to carry the protein into the host cell cytoplasm through binding to cell surface phosphatidylinositol-3-phosphate.</text>
</comment>
<comment type="similarity">
    <text evidence="8">Belongs to the RxLR effector family.</text>
</comment>
<name>CRE18_PHYIT</name>
<organism>
    <name type="scientific">Phytophthora infestans (strain T30-4)</name>
    <name type="common">Potato late blight agent</name>
    <dbReference type="NCBI Taxonomy" id="403677"/>
    <lineage>
        <taxon>Eukaryota</taxon>
        <taxon>Sar</taxon>
        <taxon>Stramenopiles</taxon>
        <taxon>Oomycota</taxon>
        <taxon>Peronosporales</taxon>
        <taxon>Peronosporaceae</taxon>
        <taxon>Phytophthora</taxon>
    </lineage>
</organism>
<proteinExistence type="evidence at transcript level"/>
<dbReference type="EMBL" id="GG689155">
    <property type="protein sequence ID" value="EEY55869.1"/>
    <property type="molecule type" value="Genomic_DNA"/>
</dbReference>
<dbReference type="RefSeq" id="XP_002909938.1">
    <property type="nucleotide sequence ID" value="XM_002909892.1"/>
</dbReference>
<dbReference type="STRING" id="403677.D0RLZ2"/>
<dbReference type="EnsemblProtists" id="PITG_23226T0">
    <property type="protein sequence ID" value="PITG_23226T0"/>
    <property type="gene ID" value="PITG_23226"/>
</dbReference>
<dbReference type="GeneID" id="9468455"/>
<dbReference type="KEGG" id="pif:PITG_23226"/>
<dbReference type="VEuPathDB" id="FungiDB:PITG_23226"/>
<dbReference type="eggNOG" id="ENOG502RH1J">
    <property type="taxonomic scope" value="Eukaryota"/>
</dbReference>
<dbReference type="HOGENOM" id="CLU_1573705_0_0_1"/>
<dbReference type="InParanoid" id="D0RLZ2"/>
<dbReference type="Proteomes" id="UP000006643">
    <property type="component" value="Partially assembled WGS sequence"/>
</dbReference>
<dbReference type="GO" id="GO:0005576">
    <property type="term" value="C:extracellular region"/>
    <property type="evidence" value="ECO:0007669"/>
    <property type="project" value="UniProtKB-SubCell"/>
</dbReference>
<dbReference type="GO" id="GO:0030430">
    <property type="term" value="C:host cell cytoplasm"/>
    <property type="evidence" value="ECO:0007669"/>
    <property type="project" value="UniProtKB-SubCell"/>
</dbReference>
<dbReference type="GO" id="GO:0042025">
    <property type="term" value="C:host cell nucleus"/>
    <property type="evidence" value="ECO:0007669"/>
    <property type="project" value="UniProtKB-SubCell"/>
</dbReference>
<accession>D0RLZ2</accession>